<comment type="function">
    <text evidence="1">Required for the formation of a threonylcarbamoyl group on adenosine at position 37 (t(6)A37) in tRNAs that read codons beginning with adenine. Is involved in the transfer of the threonylcarbamoyl moiety of threonylcarbamoyl-AMP (TC-AMP) to the N6 group of A37, together with TsaE and TsaB. TsaD likely plays a direct catalytic role in this reaction.</text>
</comment>
<comment type="catalytic activity">
    <reaction evidence="1">
        <text>L-threonylcarbamoyladenylate + adenosine(37) in tRNA = N(6)-L-threonylcarbamoyladenosine(37) in tRNA + AMP + H(+)</text>
        <dbReference type="Rhea" id="RHEA:37059"/>
        <dbReference type="Rhea" id="RHEA-COMP:10162"/>
        <dbReference type="Rhea" id="RHEA-COMP:10163"/>
        <dbReference type="ChEBI" id="CHEBI:15378"/>
        <dbReference type="ChEBI" id="CHEBI:73682"/>
        <dbReference type="ChEBI" id="CHEBI:74411"/>
        <dbReference type="ChEBI" id="CHEBI:74418"/>
        <dbReference type="ChEBI" id="CHEBI:456215"/>
        <dbReference type="EC" id="2.3.1.234"/>
    </reaction>
</comment>
<comment type="cofactor">
    <cofactor evidence="1">
        <name>Fe(2+)</name>
        <dbReference type="ChEBI" id="CHEBI:29033"/>
    </cofactor>
    <text evidence="1">Binds 1 Fe(2+) ion per subunit.</text>
</comment>
<comment type="subcellular location">
    <subcellularLocation>
        <location evidence="1">Cytoplasm</location>
    </subcellularLocation>
</comment>
<comment type="similarity">
    <text evidence="1">Belongs to the KAE1 / TsaD family.</text>
</comment>
<feature type="chain" id="PRO_0000303242" description="tRNA N6-adenosine threonylcarbamoyltransferase">
    <location>
        <begin position="1"/>
        <end position="343"/>
    </location>
</feature>
<feature type="binding site" evidence="1">
    <location>
        <position position="114"/>
    </location>
    <ligand>
        <name>Fe cation</name>
        <dbReference type="ChEBI" id="CHEBI:24875"/>
    </ligand>
</feature>
<feature type="binding site" evidence="1">
    <location>
        <position position="118"/>
    </location>
    <ligand>
        <name>Fe cation</name>
        <dbReference type="ChEBI" id="CHEBI:24875"/>
    </ligand>
</feature>
<feature type="binding site" evidence="1">
    <location>
        <begin position="137"/>
        <end position="141"/>
    </location>
    <ligand>
        <name>substrate</name>
    </ligand>
</feature>
<feature type="binding site" evidence="1">
    <location>
        <position position="171"/>
    </location>
    <ligand>
        <name>substrate</name>
    </ligand>
</feature>
<feature type="binding site" evidence="1">
    <location>
        <position position="184"/>
    </location>
    <ligand>
        <name>substrate</name>
    </ligand>
</feature>
<feature type="binding site" evidence="1">
    <location>
        <position position="188"/>
    </location>
    <ligand>
        <name>substrate</name>
    </ligand>
</feature>
<feature type="binding site" evidence="1">
    <location>
        <position position="278"/>
    </location>
    <ligand>
        <name>substrate</name>
    </ligand>
</feature>
<feature type="binding site" evidence="1">
    <location>
        <position position="306"/>
    </location>
    <ligand>
        <name>Fe cation</name>
        <dbReference type="ChEBI" id="CHEBI:24875"/>
    </ligand>
</feature>
<reference key="1">
    <citation type="journal article" date="2009" name="Genome Res.">
        <title>Complete genome of the cellulolytic thermophile Acidothermus cellulolyticus 11B provides insights into its ecophysiological and evolutionary adaptations.</title>
        <authorList>
            <person name="Barabote R.D."/>
            <person name="Xie G."/>
            <person name="Leu D.H."/>
            <person name="Normand P."/>
            <person name="Necsulea A."/>
            <person name="Daubin V."/>
            <person name="Medigue C."/>
            <person name="Adney W.S."/>
            <person name="Xu X.C."/>
            <person name="Lapidus A."/>
            <person name="Parales R.E."/>
            <person name="Detter C."/>
            <person name="Pujic P."/>
            <person name="Bruce D."/>
            <person name="Lavire C."/>
            <person name="Challacombe J.F."/>
            <person name="Brettin T.S."/>
            <person name="Berry A.M."/>
        </authorList>
    </citation>
    <scope>NUCLEOTIDE SEQUENCE [LARGE SCALE GENOMIC DNA]</scope>
    <source>
        <strain>ATCC 43068 / DSM 8971 / 11B</strain>
    </source>
</reference>
<organism>
    <name type="scientific">Acidothermus cellulolyticus (strain ATCC 43068 / DSM 8971 / 11B)</name>
    <dbReference type="NCBI Taxonomy" id="351607"/>
    <lineage>
        <taxon>Bacteria</taxon>
        <taxon>Bacillati</taxon>
        <taxon>Actinomycetota</taxon>
        <taxon>Actinomycetes</taxon>
        <taxon>Acidothermales</taxon>
        <taxon>Acidothermaceae</taxon>
        <taxon>Acidothermus</taxon>
    </lineage>
</organism>
<gene>
    <name evidence="1" type="primary">tsaD</name>
    <name type="synonym">gcp</name>
    <name type="ordered locus">Acel_0360</name>
</gene>
<accession>A0LRS4</accession>
<evidence type="ECO:0000255" key="1">
    <source>
        <dbReference type="HAMAP-Rule" id="MF_01445"/>
    </source>
</evidence>
<keyword id="KW-0012">Acyltransferase</keyword>
<keyword id="KW-0963">Cytoplasm</keyword>
<keyword id="KW-0408">Iron</keyword>
<keyword id="KW-0479">Metal-binding</keyword>
<keyword id="KW-1185">Reference proteome</keyword>
<keyword id="KW-0808">Transferase</keyword>
<keyword id="KW-0819">tRNA processing</keyword>
<protein>
    <recommendedName>
        <fullName evidence="1">tRNA N6-adenosine threonylcarbamoyltransferase</fullName>
        <ecNumber evidence="1">2.3.1.234</ecNumber>
    </recommendedName>
    <alternativeName>
        <fullName evidence="1">N6-L-threonylcarbamoyladenine synthase</fullName>
        <shortName evidence="1">t(6)A synthase</shortName>
    </alternativeName>
    <alternativeName>
        <fullName evidence="1">t(6)A37 threonylcarbamoyladenosine biosynthesis protein TsaD</fullName>
    </alternativeName>
    <alternativeName>
        <fullName evidence="1">tRNA threonylcarbamoyladenosine biosynthesis protein TsaD</fullName>
    </alternativeName>
</protein>
<sequence>MTDEPLVLGIETSCDETGVGVVRGRTLLANEIASSVDLHARFGGVVPEVASRAHLEALVPTMHRALEKAGLRLADVDAIAVTAGPGLAGTLLVGVAAAKAYALALGKPLFGVNHLAAHVAVDILEHGPLPRPCVALLVSGGHSSLLLVEDVTGTVRPLGSTVDDAAGEAFDKVARVLGLPFPGGPPIDRAAQEGDPQFVAFPRGKADDGTFDFSFAGLKTAVARWVEKRERDGEPVPVADVAAAFQEAVADVLTAKAVAACRTYGVGDLLIGGGVAANSRLRSLAAERCEAAGIRLRVPRPGLCTDNGAMVAALGACLIKAGRTPSEPEFPADSSLPITEVLV</sequence>
<dbReference type="EC" id="2.3.1.234" evidence="1"/>
<dbReference type="EMBL" id="CP000481">
    <property type="protein sequence ID" value="ABK52134.1"/>
    <property type="molecule type" value="Genomic_DNA"/>
</dbReference>
<dbReference type="RefSeq" id="WP_011719197.1">
    <property type="nucleotide sequence ID" value="NC_008578.1"/>
</dbReference>
<dbReference type="SMR" id="A0LRS4"/>
<dbReference type="FunCoup" id="A0LRS4">
    <property type="interactions" value="321"/>
</dbReference>
<dbReference type="STRING" id="351607.Acel_0360"/>
<dbReference type="KEGG" id="ace:Acel_0360"/>
<dbReference type="eggNOG" id="COG0533">
    <property type="taxonomic scope" value="Bacteria"/>
</dbReference>
<dbReference type="HOGENOM" id="CLU_023208_0_2_11"/>
<dbReference type="InParanoid" id="A0LRS4"/>
<dbReference type="OrthoDB" id="9806197at2"/>
<dbReference type="Proteomes" id="UP000008221">
    <property type="component" value="Chromosome"/>
</dbReference>
<dbReference type="GO" id="GO:0005737">
    <property type="term" value="C:cytoplasm"/>
    <property type="evidence" value="ECO:0007669"/>
    <property type="project" value="UniProtKB-SubCell"/>
</dbReference>
<dbReference type="GO" id="GO:0005506">
    <property type="term" value="F:iron ion binding"/>
    <property type="evidence" value="ECO:0007669"/>
    <property type="project" value="UniProtKB-UniRule"/>
</dbReference>
<dbReference type="GO" id="GO:0061711">
    <property type="term" value="F:N(6)-L-threonylcarbamoyladenine synthase activity"/>
    <property type="evidence" value="ECO:0007669"/>
    <property type="project" value="UniProtKB-EC"/>
</dbReference>
<dbReference type="GO" id="GO:0002949">
    <property type="term" value="P:tRNA threonylcarbamoyladenosine modification"/>
    <property type="evidence" value="ECO:0007669"/>
    <property type="project" value="UniProtKB-UniRule"/>
</dbReference>
<dbReference type="CDD" id="cd24133">
    <property type="entry name" value="ASKHA_NBD_TsaD_bac"/>
    <property type="match status" value="1"/>
</dbReference>
<dbReference type="FunFam" id="3.30.420.40:FF:000012">
    <property type="entry name" value="tRNA N6-adenosine threonylcarbamoyltransferase"/>
    <property type="match status" value="1"/>
</dbReference>
<dbReference type="FunFam" id="3.30.420.40:FF:000040">
    <property type="entry name" value="tRNA N6-adenosine threonylcarbamoyltransferase"/>
    <property type="match status" value="1"/>
</dbReference>
<dbReference type="Gene3D" id="3.30.420.40">
    <property type="match status" value="2"/>
</dbReference>
<dbReference type="HAMAP" id="MF_01445">
    <property type="entry name" value="TsaD"/>
    <property type="match status" value="1"/>
</dbReference>
<dbReference type="InterPro" id="IPR043129">
    <property type="entry name" value="ATPase_NBD"/>
</dbReference>
<dbReference type="InterPro" id="IPR000905">
    <property type="entry name" value="Gcp-like_dom"/>
</dbReference>
<dbReference type="InterPro" id="IPR017861">
    <property type="entry name" value="KAE1/TsaD"/>
</dbReference>
<dbReference type="InterPro" id="IPR017860">
    <property type="entry name" value="Peptidase_M22_CS"/>
</dbReference>
<dbReference type="InterPro" id="IPR022450">
    <property type="entry name" value="TsaD"/>
</dbReference>
<dbReference type="NCBIfam" id="TIGR00329">
    <property type="entry name" value="gcp_kae1"/>
    <property type="match status" value="1"/>
</dbReference>
<dbReference type="NCBIfam" id="TIGR03723">
    <property type="entry name" value="T6A_TsaD_YgjD"/>
    <property type="match status" value="1"/>
</dbReference>
<dbReference type="PANTHER" id="PTHR11735">
    <property type="entry name" value="TRNA N6-ADENOSINE THREONYLCARBAMOYLTRANSFERASE"/>
    <property type="match status" value="1"/>
</dbReference>
<dbReference type="PANTHER" id="PTHR11735:SF6">
    <property type="entry name" value="TRNA N6-ADENOSINE THREONYLCARBAMOYLTRANSFERASE, MITOCHONDRIAL"/>
    <property type="match status" value="1"/>
</dbReference>
<dbReference type="Pfam" id="PF00814">
    <property type="entry name" value="TsaD"/>
    <property type="match status" value="1"/>
</dbReference>
<dbReference type="PRINTS" id="PR00789">
    <property type="entry name" value="OSIALOPTASE"/>
</dbReference>
<dbReference type="SUPFAM" id="SSF53067">
    <property type="entry name" value="Actin-like ATPase domain"/>
    <property type="match status" value="1"/>
</dbReference>
<dbReference type="PROSITE" id="PS01016">
    <property type="entry name" value="GLYCOPROTEASE"/>
    <property type="match status" value="1"/>
</dbReference>
<name>TSAD_ACIC1</name>
<proteinExistence type="inferred from homology"/>